<name>TIM50_DEBHA</name>
<protein>
    <recommendedName>
        <fullName>Mitochondrial import inner membrane translocase subunit TIM50</fullName>
    </recommendedName>
</protein>
<organism>
    <name type="scientific">Debaryomyces hansenii (strain ATCC 36239 / CBS 767 / BCRC 21394 / JCM 1990 / NBRC 0083 / IGC 2968)</name>
    <name type="common">Yeast</name>
    <name type="synonym">Torulaspora hansenii</name>
    <dbReference type="NCBI Taxonomy" id="284592"/>
    <lineage>
        <taxon>Eukaryota</taxon>
        <taxon>Fungi</taxon>
        <taxon>Dikarya</taxon>
        <taxon>Ascomycota</taxon>
        <taxon>Saccharomycotina</taxon>
        <taxon>Pichiomycetes</taxon>
        <taxon>Debaryomycetaceae</taxon>
        <taxon>Debaryomyces</taxon>
    </lineage>
</organism>
<accession>Q6BVY9</accession>
<sequence>MLRNTRLLTRTISSSLRFAATKNTRLPTQHKFYSKKTDKKAEEPQSILTDDLLAKAGFEDPNEPKEKSEQQESENGEPSEEEKSNGQEQRSRRKRRAQTSKDIQRERYANMFYLATLVGGIAGVGYMCRDWDSEDEQTKLEGKDIDNGFAPNLMYGRLNKRLGSLFTFFSEPVFENLLPPPAPEAYRRPLTLVVTLDDLLIHSDWDTKHGWRTGKRPGLDYFLGYLSQYYEIVIFGSNYQMYSENTVGKLDPFHAYVSYALFREACRYKDGKLVKDLSLLNRDLGKTVLIDVEEDSWSMQPDNAIPMKPWDGSYDDTLVKLIPFLEYLATQPVKDVRPILNSFKDKSNIVQEFAEREAKLREQWKKDNKHLFDSANRPNAGNFLASLMGVPTSSVNKEPKMPLDIIREHGQLQYEHFQKYLKENAPKFLEEEQKLKDEFGKVSLNKLITEGAPSADDIAKVQAERAAAQQQ</sequence>
<dbReference type="EMBL" id="CR382134">
    <property type="protein sequence ID" value="CAG85644.1"/>
    <property type="molecule type" value="Genomic_DNA"/>
</dbReference>
<dbReference type="RefSeq" id="XP_457630.1">
    <property type="nucleotide sequence ID" value="XM_457630.1"/>
</dbReference>
<dbReference type="SMR" id="Q6BVY9"/>
<dbReference type="FunCoup" id="Q6BVY9">
    <property type="interactions" value="504"/>
</dbReference>
<dbReference type="STRING" id="284592.Q6BVY9"/>
<dbReference type="GeneID" id="2913605"/>
<dbReference type="KEGG" id="dha:DEHA2B15642g"/>
<dbReference type="VEuPathDB" id="FungiDB:DEHA2B15642g"/>
<dbReference type="eggNOG" id="KOG2832">
    <property type="taxonomic scope" value="Eukaryota"/>
</dbReference>
<dbReference type="HOGENOM" id="CLU_023309_1_2_1"/>
<dbReference type="InParanoid" id="Q6BVY9"/>
<dbReference type="OMA" id="NLRQPYT"/>
<dbReference type="OrthoDB" id="287041at2759"/>
<dbReference type="Proteomes" id="UP000000599">
    <property type="component" value="Chromosome B"/>
</dbReference>
<dbReference type="GO" id="GO:0005743">
    <property type="term" value="C:mitochondrial inner membrane"/>
    <property type="evidence" value="ECO:0007669"/>
    <property type="project" value="UniProtKB-SubCell"/>
</dbReference>
<dbReference type="GO" id="GO:0015031">
    <property type="term" value="P:protein transport"/>
    <property type="evidence" value="ECO:0007669"/>
    <property type="project" value="UniProtKB-KW"/>
</dbReference>
<dbReference type="CDD" id="cd07521">
    <property type="entry name" value="HAD_FCP1-like"/>
    <property type="match status" value="1"/>
</dbReference>
<dbReference type="FunFam" id="3.40.50.1000:FF:000019">
    <property type="entry name" value="Mitochondrial import inner membrane translocase subunit TIM50"/>
    <property type="match status" value="1"/>
</dbReference>
<dbReference type="Gene3D" id="3.40.50.1000">
    <property type="entry name" value="HAD superfamily/HAD-like"/>
    <property type="match status" value="1"/>
</dbReference>
<dbReference type="InterPro" id="IPR004274">
    <property type="entry name" value="FCP1_dom"/>
</dbReference>
<dbReference type="InterPro" id="IPR036412">
    <property type="entry name" value="HAD-like_sf"/>
</dbReference>
<dbReference type="InterPro" id="IPR023214">
    <property type="entry name" value="HAD_sf"/>
</dbReference>
<dbReference type="InterPro" id="IPR050365">
    <property type="entry name" value="TIM50"/>
</dbReference>
<dbReference type="PANTHER" id="PTHR12210">
    <property type="entry name" value="DULLARD PROTEIN PHOSPHATASE"/>
    <property type="match status" value="1"/>
</dbReference>
<dbReference type="Pfam" id="PF03031">
    <property type="entry name" value="NIF"/>
    <property type="match status" value="1"/>
</dbReference>
<dbReference type="SMART" id="SM00577">
    <property type="entry name" value="CPDc"/>
    <property type="match status" value="1"/>
</dbReference>
<dbReference type="SUPFAM" id="SSF56784">
    <property type="entry name" value="HAD-like"/>
    <property type="match status" value="1"/>
</dbReference>
<dbReference type="PROSITE" id="PS50969">
    <property type="entry name" value="FCP1"/>
    <property type="match status" value="1"/>
</dbReference>
<comment type="function">
    <text evidence="1">Essential component of the TIM23 complex, a complex that mediates the translocation of transit peptide-containing proteins across the mitochondrial inner membrane. Required to direct preproteins in transit and direct them to the channel protein TIM23, and possibly facilitates transfer of the translocating proteins from the TOM complex to the TIM23 complex (By similarity).</text>
</comment>
<comment type="subunit">
    <text evidence="1">Component of the TIM23 complex, at least composed of TIM23, TIM17, TIM50 and TIM21. Interacts with preproteins in transit (By similarity).</text>
</comment>
<comment type="subcellular location">
    <subcellularLocation>
        <location evidence="1">Mitochondrion inner membrane</location>
        <topology evidence="1">Single-pass membrane protein</topology>
    </subcellularLocation>
</comment>
<comment type="similarity">
    <text evidence="5">Belongs to the TIM50 family.</text>
</comment>
<proteinExistence type="inferred from homology"/>
<evidence type="ECO:0000250" key="1"/>
<evidence type="ECO:0000255" key="2"/>
<evidence type="ECO:0000255" key="3">
    <source>
        <dbReference type="PROSITE-ProRule" id="PRU00336"/>
    </source>
</evidence>
<evidence type="ECO:0000256" key="4">
    <source>
        <dbReference type="SAM" id="MobiDB-lite"/>
    </source>
</evidence>
<evidence type="ECO:0000305" key="5"/>
<keyword id="KW-0472">Membrane</keyword>
<keyword id="KW-0496">Mitochondrion</keyword>
<keyword id="KW-0999">Mitochondrion inner membrane</keyword>
<keyword id="KW-0653">Protein transport</keyword>
<keyword id="KW-1185">Reference proteome</keyword>
<keyword id="KW-0809">Transit peptide</keyword>
<keyword id="KW-0811">Translocation</keyword>
<keyword id="KW-0812">Transmembrane</keyword>
<keyword id="KW-1133">Transmembrane helix</keyword>
<keyword id="KW-0813">Transport</keyword>
<gene>
    <name type="primary">TIM50</name>
    <name type="ordered locus">DEHA2B15642g</name>
</gene>
<feature type="transit peptide" description="Mitochondrion" evidence="2">
    <location>
        <begin position="1"/>
        <end position="104"/>
    </location>
</feature>
<feature type="chain" id="PRO_0000043130" description="Mitochondrial import inner membrane translocase subunit TIM50">
    <location>
        <begin position="105"/>
        <end position="471"/>
    </location>
</feature>
<feature type="topological domain" description="Mitochondrial matrix" evidence="2">
    <location>
        <begin position="105"/>
        <end position="110"/>
    </location>
</feature>
<feature type="transmembrane region" description="Helical" evidence="2">
    <location>
        <begin position="111"/>
        <end position="127"/>
    </location>
</feature>
<feature type="topological domain" description="Mitochondrial intermembrane" evidence="2">
    <location>
        <begin position="128"/>
        <end position="471"/>
    </location>
</feature>
<feature type="domain" description="FCP1 homology" evidence="3">
    <location>
        <begin position="185"/>
        <end position="328"/>
    </location>
</feature>
<feature type="region of interest" description="Disordered" evidence="4">
    <location>
        <begin position="29"/>
        <end position="101"/>
    </location>
</feature>
<feature type="compositionally biased region" description="Acidic residues" evidence="4">
    <location>
        <begin position="71"/>
        <end position="80"/>
    </location>
</feature>
<reference key="1">
    <citation type="journal article" date="2004" name="Nature">
        <title>Genome evolution in yeasts.</title>
        <authorList>
            <person name="Dujon B."/>
            <person name="Sherman D."/>
            <person name="Fischer G."/>
            <person name="Durrens P."/>
            <person name="Casaregola S."/>
            <person name="Lafontaine I."/>
            <person name="de Montigny J."/>
            <person name="Marck C."/>
            <person name="Neuveglise C."/>
            <person name="Talla E."/>
            <person name="Goffard N."/>
            <person name="Frangeul L."/>
            <person name="Aigle M."/>
            <person name="Anthouard V."/>
            <person name="Babour A."/>
            <person name="Barbe V."/>
            <person name="Barnay S."/>
            <person name="Blanchin S."/>
            <person name="Beckerich J.-M."/>
            <person name="Beyne E."/>
            <person name="Bleykasten C."/>
            <person name="Boisrame A."/>
            <person name="Boyer J."/>
            <person name="Cattolico L."/>
            <person name="Confanioleri F."/>
            <person name="de Daruvar A."/>
            <person name="Despons L."/>
            <person name="Fabre E."/>
            <person name="Fairhead C."/>
            <person name="Ferry-Dumazet H."/>
            <person name="Groppi A."/>
            <person name="Hantraye F."/>
            <person name="Hennequin C."/>
            <person name="Jauniaux N."/>
            <person name="Joyet P."/>
            <person name="Kachouri R."/>
            <person name="Kerrest A."/>
            <person name="Koszul R."/>
            <person name="Lemaire M."/>
            <person name="Lesur I."/>
            <person name="Ma L."/>
            <person name="Muller H."/>
            <person name="Nicaud J.-M."/>
            <person name="Nikolski M."/>
            <person name="Oztas S."/>
            <person name="Ozier-Kalogeropoulos O."/>
            <person name="Pellenz S."/>
            <person name="Potier S."/>
            <person name="Richard G.-F."/>
            <person name="Straub M.-L."/>
            <person name="Suleau A."/>
            <person name="Swennen D."/>
            <person name="Tekaia F."/>
            <person name="Wesolowski-Louvel M."/>
            <person name="Westhof E."/>
            <person name="Wirth B."/>
            <person name="Zeniou-Meyer M."/>
            <person name="Zivanovic Y."/>
            <person name="Bolotin-Fukuhara M."/>
            <person name="Thierry A."/>
            <person name="Bouchier C."/>
            <person name="Caudron B."/>
            <person name="Scarpelli C."/>
            <person name="Gaillardin C."/>
            <person name="Weissenbach J."/>
            <person name="Wincker P."/>
            <person name="Souciet J.-L."/>
        </authorList>
    </citation>
    <scope>NUCLEOTIDE SEQUENCE [LARGE SCALE GENOMIC DNA]</scope>
    <source>
        <strain>ATCC 36239 / CBS 767 / BCRC 21394 / JCM 1990 / NBRC 0083 / IGC 2968</strain>
    </source>
</reference>